<reference key="1">
    <citation type="journal article" date="2000" name="Nature">
        <title>The genome sequence of the plant pathogen Xylella fastidiosa.</title>
        <authorList>
            <person name="Simpson A.J.G."/>
            <person name="Reinach F.C."/>
            <person name="Arruda P."/>
            <person name="Abreu F.A."/>
            <person name="Acencio M."/>
            <person name="Alvarenga R."/>
            <person name="Alves L.M.C."/>
            <person name="Araya J.E."/>
            <person name="Baia G.S."/>
            <person name="Baptista C.S."/>
            <person name="Barros M.H."/>
            <person name="Bonaccorsi E.D."/>
            <person name="Bordin S."/>
            <person name="Bove J.M."/>
            <person name="Briones M.R.S."/>
            <person name="Bueno M.R.P."/>
            <person name="Camargo A.A."/>
            <person name="Camargo L.E.A."/>
            <person name="Carraro D.M."/>
            <person name="Carrer H."/>
            <person name="Colauto N.B."/>
            <person name="Colombo C."/>
            <person name="Costa F.F."/>
            <person name="Costa M.C.R."/>
            <person name="Costa-Neto C.M."/>
            <person name="Coutinho L.L."/>
            <person name="Cristofani M."/>
            <person name="Dias-Neto E."/>
            <person name="Docena C."/>
            <person name="El-Dorry H."/>
            <person name="Facincani A.P."/>
            <person name="Ferreira A.J.S."/>
            <person name="Ferreira V.C.A."/>
            <person name="Ferro J.A."/>
            <person name="Fraga J.S."/>
            <person name="Franca S.C."/>
            <person name="Franco M.C."/>
            <person name="Frohme M."/>
            <person name="Furlan L.R."/>
            <person name="Garnier M."/>
            <person name="Goldman G.H."/>
            <person name="Goldman M.H.S."/>
            <person name="Gomes S.L."/>
            <person name="Gruber A."/>
            <person name="Ho P.L."/>
            <person name="Hoheisel J.D."/>
            <person name="Junqueira M.L."/>
            <person name="Kemper E.L."/>
            <person name="Kitajima J.P."/>
            <person name="Krieger J.E."/>
            <person name="Kuramae E.E."/>
            <person name="Laigret F."/>
            <person name="Lambais M.R."/>
            <person name="Leite L.C.C."/>
            <person name="Lemos E.G.M."/>
            <person name="Lemos M.V.F."/>
            <person name="Lopes S.A."/>
            <person name="Lopes C.R."/>
            <person name="Machado J.A."/>
            <person name="Machado M.A."/>
            <person name="Madeira A.M.B.N."/>
            <person name="Madeira H.M.F."/>
            <person name="Marino C.L."/>
            <person name="Marques M.V."/>
            <person name="Martins E.A.L."/>
            <person name="Martins E.M.F."/>
            <person name="Matsukuma A.Y."/>
            <person name="Menck C.F.M."/>
            <person name="Miracca E.C."/>
            <person name="Miyaki C.Y."/>
            <person name="Monteiro-Vitorello C.B."/>
            <person name="Moon D.H."/>
            <person name="Nagai M.A."/>
            <person name="Nascimento A.L.T.O."/>
            <person name="Netto L.E.S."/>
            <person name="Nhani A. Jr."/>
            <person name="Nobrega F.G."/>
            <person name="Nunes L.R."/>
            <person name="Oliveira M.A."/>
            <person name="de Oliveira M.C."/>
            <person name="de Oliveira R.C."/>
            <person name="Palmieri D.A."/>
            <person name="Paris A."/>
            <person name="Peixoto B.R."/>
            <person name="Pereira G.A.G."/>
            <person name="Pereira H.A. Jr."/>
            <person name="Pesquero J.B."/>
            <person name="Quaggio R.B."/>
            <person name="Roberto P.G."/>
            <person name="Rodrigues V."/>
            <person name="de Rosa A.J.M."/>
            <person name="de Rosa V.E. Jr."/>
            <person name="de Sa R.G."/>
            <person name="Santelli R.V."/>
            <person name="Sawasaki H.E."/>
            <person name="da Silva A.C.R."/>
            <person name="da Silva A.M."/>
            <person name="da Silva F.R."/>
            <person name="Silva W.A. Jr."/>
            <person name="da Silveira J.F."/>
            <person name="Silvestri M.L.Z."/>
            <person name="Siqueira W.J."/>
            <person name="de Souza A.A."/>
            <person name="de Souza A.P."/>
            <person name="Terenzi M.F."/>
            <person name="Truffi D."/>
            <person name="Tsai S.M."/>
            <person name="Tsuhako M.H."/>
            <person name="Vallada H."/>
            <person name="Van Sluys M.A."/>
            <person name="Verjovski-Almeida S."/>
            <person name="Vettore A.L."/>
            <person name="Zago M.A."/>
            <person name="Zatz M."/>
            <person name="Meidanis J."/>
            <person name="Setubal J.C."/>
        </authorList>
    </citation>
    <scope>NUCLEOTIDE SEQUENCE [LARGE SCALE GENOMIC DNA]</scope>
    <source>
        <strain>9a5c</strain>
    </source>
</reference>
<dbReference type="EMBL" id="AE003849">
    <property type="protein sequence ID" value="AAF85222.1"/>
    <property type="molecule type" value="Genomic_DNA"/>
</dbReference>
<dbReference type="PIR" id="H82559">
    <property type="entry name" value="H82559"/>
</dbReference>
<dbReference type="RefSeq" id="WP_010894868.1">
    <property type="nucleotide sequence ID" value="NC_002488.3"/>
</dbReference>
<dbReference type="SMR" id="Q9PAS2"/>
<dbReference type="STRING" id="160492.XF_2423"/>
<dbReference type="KEGG" id="xfa:XF_2423"/>
<dbReference type="eggNOG" id="COG0211">
    <property type="taxonomic scope" value="Bacteria"/>
</dbReference>
<dbReference type="HOGENOM" id="CLU_095424_4_0_6"/>
<dbReference type="Proteomes" id="UP000000812">
    <property type="component" value="Chromosome"/>
</dbReference>
<dbReference type="GO" id="GO:0022625">
    <property type="term" value="C:cytosolic large ribosomal subunit"/>
    <property type="evidence" value="ECO:0007669"/>
    <property type="project" value="TreeGrafter"/>
</dbReference>
<dbReference type="GO" id="GO:0003735">
    <property type="term" value="F:structural constituent of ribosome"/>
    <property type="evidence" value="ECO:0007669"/>
    <property type="project" value="InterPro"/>
</dbReference>
<dbReference type="GO" id="GO:0006412">
    <property type="term" value="P:translation"/>
    <property type="evidence" value="ECO:0007669"/>
    <property type="project" value="UniProtKB-UniRule"/>
</dbReference>
<dbReference type="FunFam" id="2.40.50.100:FF:000020">
    <property type="entry name" value="50S ribosomal protein L27"/>
    <property type="match status" value="1"/>
</dbReference>
<dbReference type="Gene3D" id="2.40.50.100">
    <property type="match status" value="1"/>
</dbReference>
<dbReference type="HAMAP" id="MF_00539">
    <property type="entry name" value="Ribosomal_bL27"/>
    <property type="match status" value="1"/>
</dbReference>
<dbReference type="InterPro" id="IPR001684">
    <property type="entry name" value="Ribosomal_bL27"/>
</dbReference>
<dbReference type="InterPro" id="IPR018261">
    <property type="entry name" value="Ribosomal_bL27_CS"/>
</dbReference>
<dbReference type="NCBIfam" id="TIGR00062">
    <property type="entry name" value="L27"/>
    <property type="match status" value="1"/>
</dbReference>
<dbReference type="PANTHER" id="PTHR15893:SF0">
    <property type="entry name" value="LARGE RIBOSOMAL SUBUNIT PROTEIN BL27M"/>
    <property type="match status" value="1"/>
</dbReference>
<dbReference type="PANTHER" id="PTHR15893">
    <property type="entry name" value="RIBOSOMAL PROTEIN L27"/>
    <property type="match status" value="1"/>
</dbReference>
<dbReference type="Pfam" id="PF01016">
    <property type="entry name" value="Ribosomal_L27"/>
    <property type="match status" value="1"/>
</dbReference>
<dbReference type="PRINTS" id="PR00063">
    <property type="entry name" value="RIBOSOMALL27"/>
</dbReference>
<dbReference type="SUPFAM" id="SSF110324">
    <property type="entry name" value="Ribosomal L27 protein-like"/>
    <property type="match status" value="1"/>
</dbReference>
<dbReference type="PROSITE" id="PS00831">
    <property type="entry name" value="RIBOSOMAL_L27"/>
    <property type="match status" value="1"/>
</dbReference>
<protein>
    <recommendedName>
        <fullName evidence="1">Large ribosomal subunit protein bL27</fullName>
    </recommendedName>
    <alternativeName>
        <fullName evidence="2">50S ribosomal protein L27</fullName>
    </alternativeName>
</protein>
<accession>Q9PAS2</accession>
<comment type="similarity">
    <text evidence="1">Belongs to the bacterial ribosomal protein bL27 family.</text>
</comment>
<gene>
    <name evidence="1" type="primary">rpmA</name>
    <name type="ordered locus">XF_2423</name>
</gene>
<organism>
    <name type="scientific">Xylella fastidiosa (strain 9a5c)</name>
    <dbReference type="NCBI Taxonomy" id="160492"/>
    <lineage>
        <taxon>Bacteria</taxon>
        <taxon>Pseudomonadati</taxon>
        <taxon>Pseudomonadota</taxon>
        <taxon>Gammaproteobacteria</taxon>
        <taxon>Lysobacterales</taxon>
        <taxon>Lysobacteraceae</taxon>
        <taxon>Xylella</taxon>
    </lineage>
</organism>
<feature type="chain" id="PRO_0000181211" description="Large ribosomal subunit protein bL27">
    <location>
        <begin position="1"/>
        <end position="85"/>
    </location>
</feature>
<sequence length="85" mass="9012">MAHKKGVGSSRNGRDSNPKYLGVKLFGGQAIEAGNIIIRQRGTQFHAGDGVGLGRDHTLFALVDGTVAFSIKGPKKRRTVNVIPA</sequence>
<name>RL27_XYLFA</name>
<evidence type="ECO:0000255" key="1">
    <source>
        <dbReference type="HAMAP-Rule" id="MF_00539"/>
    </source>
</evidence>
<evidence type="ECO:0000305" key="2"/>
<keyword id="KW-0687">Ribonucleoprotein</keyword>
<keyword id="KW-0689">Ribosomal protein</keyword>
<proteinExistence type="inferred from homology"/>